<dbReference type="EMBL" id="CR858768">
    <property type="protein sequence ID" value="CAH90975.1"/>
    <property type="molecule type" value="mRNA"/>
</dbReference>
<dbReference type="RefSeq" id="NP_001128938.1">
    <property type="nucleotide sequence ID" value="NM_001135466.1"/>
</dbReference>
<dbReference type="SMR" id="Q5RB85"/>
<dbReference type="FunCoup" id="Q5RB85">
    <property type="interactions" value="431"/>
</dbReference>
<dbReference type="GeneID" id="100172596"/>
<dbReference type="CTD" id="6508"/>
<dbReference type="eggNOG" id="KOG1172">
    <property type="taxonomic scope" value="Eukaryota"/>
</dbReference>
<dbReference type="InParanoid" id="Q5RB85"/>
<dbReference type="Proteomes" id="UP000001595">
    <property type="component" value="Unplaced"/>
</dbReference>
<dbReference type="GO" id="GO:0005886">
    <property type="term" value="C:plasma membrane"/>
    <property type="evidence" value="ECO:0000250"/>
    <property type="project" value="UniProtKB"/>
</dbReference>
<dbReference type="GO" id="GO:0140900">
    <property type="term" value="F:chloride:bicarbonate antiporter activity"/>
    <property type="evidence" value="ECO:0000250"/>
    <property type="project" value="UniProtKB"/>
</dbReference>
<dbReference type="GO" id="GO:0045851">
    <property type="term" value="P:pH reduction"/>
    <property type="evidence" value="ECO:0000250"/>
    <property type="project" value="UniProtKB"/>
</dbReference>
<dbReference type="GO" id="GO:0098901">
    <property type="term" value="P:regulation of cardiac muscle cell action potential"/>
    <property type="evidence" value="ECO:0000250"/>
    <property type="project" value="UniProtKB"/>
</dbReference>
<dbReference type="GO" id="GO:0051453">
    <property type="term" value="P:regulation of intracellular pH"/>
    <property type="evidence" value="ECO:0007669"/>
    <property type="project" value="TreeGrafter"/>
</dbReference>
<dbReference type="FunFam" id="1.10.287.570:FF:000001">
    <property type="entry name" value="Anion exchange protein"/>
    <property type="match status" value="1"/>
</dbReference>
<dbReference type="FunFam" id="3.40.930.10:FF:000004">
    <property type="entry name" value="Anion exchange protein"/>
    <property type="match status" value="1"/>
</dbReference>
<dbReference type="Gene3D" id="1.10.287.570">
    <property type="entry name" value="Helical hairpin bin"/>
    <property type="match status" value="1"/>
</dbReference>
<dbReference type="Gene3D" id="3.40.930.10">
    <property type="entry name" value="Mannitol-specific EII, Chain A"/>
    <property type="match status" value="1"/>
</dbReference>
<dbReference type="InterPro" id="IPR001717">
    <property type="entry name" value="Anion_exchange"/>
</dbReference>
<dbReference type="InterPro" id="IPR002979">
    <property type="entry name" value="Anion_exchange_3"/>
</dbReference>
<dbReference type="InterPro" id="IPR018241">
    <property type="entry name" value="Anion_exchange_CS"/>
</dbReference>
<dbReference type="InterPro" id="IPR013769">
    <property type="entry name" value="Band3_cytoplasmic_dom"/>
</dbReference>
<dbReference type="InterPro" id="IPR011531">
    <property type="entry name" value="HCO3_transpt-like_TM_dom"/>
</dbReference>
<dbReference type="InterPro" id="IPR003020">
    <property type="entry name" value="HCO3_transpt_euk"/>
</dbReference>
<dbReference type="InterPro" id="IPR016152">
    <property type="entry name" value="PTrfase/Anion_transptr"/>
</dbReference>
<dbReference type="NCBIfam" id="TIGR00834">
    <property type="entry name" value="ae"/>
    <property type="match status" value="1"/>
</dbReference>
<dbReference type="PANTHER" id="PTHR11453">
    <property type="entry name" value="ANION EXCHANGE PROTEIN"/>
    <property type="match status" value="1"/>
</dbReference>
<dbReference type="PANTHER" id="PTHR11453:SF15">
    <property type="entry name" value="ANION EXCHANGE PROTEIN 3"/>
    <property type="match status" value="1"/>
</dbReference>
<dbReference type="Pfam" id="PF07565">
    <property type="entry name" value="Band_3_cyto"/>
    <property type="match status" value="1"/>
</dbReference>
<dbReference type="Pfam" id="PF00955">
    <property type="entry name" value="HCO3_cotransp"/>
    <property type="match status" value="2"/>
</dbReference>
<dbReference type="PRINTS" id="PR00165">
    <property type="entry name" value="ANIONEXCHNGR"/>
</dbReference>
<dbReference type="PRINTS" id="PR01189">
    <property type="entry name" value="ANIONEXHNGR3"/>
</dbReference>
<dbReference type="PRINTS" id="PR01231">
    <property type="entry name" value="HCO3TRNSPORT"/>
</dbReference>
<dbReference type="SUPFAM" id="SSF55804">
    <property type="entry name" value="Phoshotransferase/anion transport protein"/>
    <property type="match status" value="1"/>
</dbReference>
<dbReference type="PROSITE" id="PS00219">
    <property type="entry name" value="ANION_EXCHANGER_1"/>
    <property type="match status" value="1"/>
</dbReference>
<dbReference type="PROSITE" id="PS00220">
    <property type="entry name" value="ANION_EXCHANGER_2"/>
    <property type="match status" value="1"/>
</dbReference>
<proteinExistence type="evidence at transcript level"/>
<organism>
    <name type="scientific">Pongo abelii</name>
    <name type="common">Sumatran orangutan</name>
    <name type="synonym">Pongo pygmaeus abelii</name>
    <dbReference type="NCBI Taxonomy" id="9601"/>
    <lineage>
        <taxon>Eukaryota</taxon>
        <taxon>Metazoa</taxon>
        <taxon>Chordata</taxon>
        <taxon>Craniata</taxon>
        <taxon>Vertebrata</taxon>
        <taxon>Euteleostomi</taxon>
        <taxon>Mammalia</taxon>
        <taxon>Eutheria</taxon>
        <taxon>Euarchontoglires</taxon>
        <taxon>Primates</taxon>
        <taxon>Haplorrhini</taxon>
        <taxon>Catarrhini</taxon>
        <taxon>Hominidae</taxon>
        <taxon>Pongo</taxon>
    </lineage>
</organism>
<keyword id="KW-0039">Anion exchange</keyword>
<keyword id="KW-0050">Antiport</keyword>
<keyword id="KW-1003">Cell membrane</keyword>
<keyword id="KW-0406">Ion transport</keyword>
<keyword id="KW-0449">Lipoprotein</keyword>
<keyword id="KW-0472">Membrane</keyword>
<keyword id="KW-0488">Methylation</keyword>
<keyword id="KW-0564">Palmitate</keyword>
<keyword id="KW-0597">Phosphoprotein</keyword>
<keyword id="KW-1185">Reference proteome</keyword>
<keyword id="KW-0812">Transmembrane</keyword>
<keyword id="KW-1133">Transmembrane helix</keyword>
<keyword id="KW-0813">Transport</keyword>
<comment type="function">
    <text evidence="4">Sodium-independent anion exchanger which mediates the electroneutral exchange of chloride for bicarbonate ions across the cell membrane. May be involved in the regulation of intracellular pH, and the modulation of cardiac action potential.</text>
</comment>
<comment type="catalytic activity">
    <reaction evidence="2">
        <text>hydrogencarbonate(in) + chloride(out) = hydrogencarbonate(out) + chloride(in)</text>
        <dbReference type="Rhea" id="RHEA:72363"/>
        <dbReference type="ChEBI" id="CHEBI:17544"/>
        <dbReference type="ChEBI" id="CHEBI:17996"/>
    </reaction>
</comment>
<comment type="subcellular location">
    <subcellularLocation>
        <location evidence="2">Cell membrane</location>
        <topology evidence="5">Multi-pass membrane protein</topology>
    </subcellularLocation>
</comment>
<comment type="similarity">
    <text evidence="7">Belongs to the anion exchanger (TC 2.A.31) family.</text>
</comment>
<evidence type="ECO:0000250" key="1"/>
<evidence type="ECO:0000250" key="2">
    <source>
        <dbReference type="UniProtKB" id="P16283"/>
    </source>
</evidence>
<evidence type="ECO:0000250" key="3">
    <source>
        <dbReference type="UniProtKB" id="P23348"/>
    </source>
</evidence>
<evidence type="ECO:0000250" key="4">
    <source>
        <dbReference type="UniProtKB" id="P48751"/>
    </source>
</evidence>
<evidence type="ECO:0000255" key="5"/>
<evidence type="ECO:0000256" key="6">
    <source>
        <dbReference type="SAM" id="MobiDB-lite"/>
    </source>
</evidence>
<evidence type="ECO:0000305" key="7"/>
<name>B3A3_PONAB</name>
<sequence>MANGVIPPPGGASPLPQVRVPLEEPPLSPDVEEEDDDLGKTLAVSRFGDLISKPPAWDPEKPSRSYSERDFEFHRHTSHHTHHPLSARLPPPHKLRRLPPTSARHTRRKRKKEKTSAPPSEETPPIQEEGGAGVEEEEEEEEEEEGESEAEPVEPPPSGTPQKAKFSIGSDEDDSPGLPGRAAVTKPLPSVGPQTDKSPQHSSSSPSPRAQASRLAGEKSRPWSPSASYDLRERLCPGSALGNSGGPEQQVPTDEAEAQMLGSADLDDMKSHRLEDNPGVRRHLVKKPSRTQGGRGSPSGLAPILRRKKKKKKLDRRPHEVFVELNELMLDRSQEPHWRETARWIKFEEDVEEETERWGKPHVASLSFRSLLELRRTIAHGAALLDLEQTTLPGIAHLVVETMIVSDQIRPEDRASVLRTLLLKHSHPNDDKDSGFFPRNPSSSSMNSVLGNHHPTPSHGPDGAVPTMADDLGEPAPLWPHDPDAKEKPLHMPGGDGHRGKSLKLLEKIPEDAEATVVLVGCVPFLEQPAAAFVRLNEAVLLESVLEVPVPVCFLFVMLGPSHTSTDYHELGRSIATLMSDKLFHEAAYQADDRQDLLSAISEFLDGSIVIPPSEVEGRDLLRSVAAFQRELLRKRREREQTKVEMTTRGGYTAPGKELSLELGGSEATPEDDPLLRTGSVFGGLVRDVRRRYPHYPSDLRDALHSQCVAAVLFIYFAALSPAITFGGLLGEKTEGLMGVSELIVSTAVLGVLFSLLGAQPLLVVGFSGPLLVFEEAFFKFCRAQDLEYLTGRVWVGLWLVVFVLALVAAEGSFLVRYISPFTQEIFAFLISLIFIYETFYKLYKVFTEHPLLPFYPPEGALEGSLDAGLEPNGSALPPTEGPPSPRNQPNTALLSLILMLGTFFIAFFLRKFRNSRFLGGKARRIIGDFGIPISILVMVLVDYSITDTYTQKLTVPTGLSVTPPDKRSWFIPPLGSARPFPPWMMVAAAVPALLVLILIFMETQITALIVSQKARRLLKGSGFHLDLLLIGSLGGLCGLFGLPWLTAATVRSVTHVNALTVMRTAIAPGDKPQIQEVREQRVTGVLIASLVGLSIVMGAVLRRIPLAVLFGIFLYMGVTSLSGIQLSQRLLLILMPAKHHPEQPYVTKVKTWRMHLFICIQLGCIALLWVVKSTAASLAFPFLLLLTVPLRHCLLPRLFQDRELQALDSEDAEPNFDEDGQDEYNELHMPV</sequence>
<reference key="1">
    <citation type="submission" date="2004-11" db="EMBL/GenBank/DDBJ databases">
        <authorList>
            <consortium name="The German cDNA consortium"/>
        </authorList>
    </citation>
    <scope>NUCLEOTIDE SEQUENCE [LARGE SCALE MRNA]</scope>
    <source>
        <tissue>Brain cortex</tissue>
    </source>
</reference>
<protein>
    <recommendedName>
        <fullName>Anion exchange protein 3</fullName>
        <shortName>AE 3</shortName>
        <shortName>Anion exchanger 3</shortName>
    </recommendedName>
    <alternativeName>
        <fullName>Solute carrier family 4 member 3</fullName>
    </alternativeName>
</protein>
<accession>Q5RB85</accession>
<feature type="chain" id="PRO_0000385515" description="Anion exchange protein 3">
    <location>
        <begin position="1"/>
        <end position="1232"/>
    </location>
</feature>
<feature type="topological domain" description="Cytoplasmic">
    <location>
        <begin position="1"/>
        <end position="708"/>
    </location>
</feature>
<feature type="transmembrane region" description="Helical" evidence="5">
    <location>
        <begin position="709"/>
        <end position="731"/>
    </location>
</feature>
<feature type="transmembrane region" description="Helical" evidence="5">
    <location>
        <begin position="737"/>
        <end position="774"/>
    </location>
</feature>
<feature type="transmembrane region" description="Helical" evidence="5">
    <location>
        <begin position="794"/>
        <end position="816"/>
    </location>
</feature>
<feature type="transmembrane region" description="Helical" evidence="5">
    <location>
        <begin position="826"/>
        <end position="847"/>
    </location>
</feature>
<feature type="transmembrane region" description="Helical" evidence="5">
    <location>
        <begin position="893"/>
        <end position="910"/>
    </location>
</feature>
<feature type="topological domain" description="Cytoplasmic" evidence="5">
    <location>
        <begin position="911"/>
        <end position="925"/>
    </location>
</feature>
<feature type="transmembrane region" description="Helical" evidence="5">
    <location>
        <begin position="926"/>
        <end position="946"/>
    </location>
</feature>
<feature type="transmembrane region" description="Helical" evidence="5">
    <location>
        <begin position="980"/>
        <end position="1002"/>
    </location>
</feature>
<feature type="transmembrane region" description="Helical" evidence="5">
    <location>
        <begin position="1028"/>
        <end position="1049"/>
    </location>
</feature>
<feature type="transmembrane region" description="Helical" evidence="5">
    <location>
        <begin position="1083"/>
        <end position="1128"/>
    </location>
</feature>
<feature type="transmembrane region" description="Helical" evidence="5">
    <location>
        <begin position="1155"/>
        <end position="1191"/>
    </location>
</feature>
<feature type="region of interest" description="Disordered" evidence="6">
    <location>
        <begin position="1"/>
        <end position="316"/>
    </location>
</feature>
<feature type="region of interest" description="Disordered" evidence="6">
    <location>
        <begin position="429"/>
        <end position="498"/>
    </location>
</feature>
<feature type="region of interest" description="Membrane (anion exchange)">
    <location>
        <begin position="709"/>
        <end position="1232"/>
    </location>
</feature>
<feature type="compositionally biased region" description="Pro residues" evidence="6">
    <location>
        <begin position="1"/>
        <end position="11"/>
    </location>
</feature>
<feature type="compositionally biased region" description="Basic and acidic residues" evidence="6">
    <location>
        <begin position="58"/>
        <end position="75"/>
    </location>
</feature>
<feature type="compositionally biased region" description="Basic residues" evidence="6">
    <location>
        <begin position="76"/>
        <end position="97"/>
    </location>
</feature>
<feature type="compositionally biased region" description="Basic residues" evidence="6">
    <location>
        <begin position="104"/>
        <end position="113"/>
    </location>
</feature>
<feature type="compositionally biased region" description="Acidic residues" evidence="6">
    <location>
        <begin position="134"/>
        <end position="152"/>
    </location>
</feature>
<feature type="compositionally biased region" description="Low complexity" evidence="6">
    <location>
        <begin position="200"/>
        <end position="214"/>
    </location>
</feature>
<feature type="compositionally biased region" description="Basic and acidic residues" evidence="6">
    <location>
        <begin position="267"/>
        <end position="279"/>
    </location>
</feature>
<feature type="compositionally biased region" description="Basic residues" evidence="6">
    <location>
        <begin position="280"/>
        <end position="289"/>
    </location>
</feature>
<feature type="compositionally biased region" description="Basic residues" evidence="6">
    <location>
        <begin position="305"/>
        <end position="316"/>
    </location>
</feature>
<feature type="compositionally biased region" description="Polar residues" evidence="6">
    <location>
        <begin position="440"/>
        <end position="450"/>
    </location>
</feature>
<feature type="compositionally biased region" description="Basic and acidic residues" evidence="6">
    <location>
        <begin position="481"/>
        <end position="498"/>
    </location>
</feature>
<feature type="modified residue" description="Phosphoserine" evidence="2">
    <location>
        <position position="167"/>
    </location>
</feature>
<feature type="modified residue" description="Phosphoserine" evidence="2">
    <location>
        <position position="170"/>
    </location>
</feature>
<feature type="modified residue" description="Phosphoserine" evidence="3">
    <location>
        <position position="175"/>
    </location>
</feature>
<feature type="modified residue" description="Phosphoserine" evidence="2">
    <location>
        <position position="198"/>
    </location>
</feature>
<feature type="modified residue" description="Omega-N-methylarginine" evidence="2">
    <location>
        <position position="295"/>
    </location>
</feature>
<feature type="lipid moiety-binding region" description="S-palmitoyl cysteine" evidence="1">
    <location>
        <position position="1165"/>
    </location>
</feature>
<gene>
    <name type="primary">SLC4A3</name>
</gene>